<keyword id="KW-0150">Chloroplast</keyword>
<keyword id="KW-0934">Plastid</keyword>
<keyword id="KW-0687">Ribonucleoprotein</keyword>
<keyword id="KW-0689">Ribosomal protein</keyword>
<keyword id="KW-0691">RNA editing</keyword>
<protein>
    <recommendedName>
        <fullName evidence="2">Large ribosomal subunit protein bL36c</fullName>
    </recommendedName>
    <alternativeName>
        <fullName evidence="3">50S ribosomal protein L36, chloroplastic</fullName>
    </alternativeName>
</protein>
<proteinExistence type="inferred from homology"/>
<name>RK36_HUPLU</name>
<geneLocation type="chloroplast"/>
<feature type="chain" id="PRO_0000126323" description="Large ribosomal subunit protein bL36c">
    <location>
        <begin position="1"/>
        <end position="37"/>
    </location>
</feature>
<gene>
    <name evidence="2" type="primary">rpl36</name>
</gene>
<comment type="subcellular location">
    <subcellularLocation>
        <location>Plastid</location>
        <location>Chloroplast</location>
    </subcellularLocation>
</comment>
<comment type="RNA editing">
    <location>
        <position position="1" evidence="1"/>
    </location>
    <text evidence="1">The initiator methionine is created by RNA editing.</text>
</comment>
<comment type="similarity">
    <text evidence="2">Belongs to the bacterial ribosomal protein bL36 family.</text>
</comment>
<accession>Q5SD21</accession>
<organism>
    <name type="scientific">Huperzia lucidula</name>
    <name type="common">Shining clubmoss</name>
    <name type="synonym">Lycopodium lucidulum</name>
    <dbReference type="NCBI Taxonomy" id="37429"/>
    <lineage>
        <taxon>Eukaryota</taxon>
        <taxon>Viridiplantae</taxon>
        <taxon>Streptophyta</taxon>
        <taxon>Embryophyta</taxon>
        <taxon>Tracheophyta</taxon>
        <taxon>Lycopodiopsida</taxon>
        <taxon>Lycopodiales</taxon>
        <taxon>Lycopodiaceae</taxon>
        <taxon>Huperzioideae</taxon>
        <taxon>Huperzia</taxon>
    </lineage>
</organism>
<reference key="1">
    <citation type="journal article" date="2005" name="Gene">
        <title>The first complete chloroplast genome sequence of a lycophyte, Huperzia lucidula (Lycopodiaceae).</title>
        <authorList>
            <person name="Wolf P.G."/>
            <person name="Karol K.G."/>
            <person name="Mandoli D.F."/>
            <person name="Kuehl J.V."/>
            <person name="Arumuganathan K."/>
            <person name="Ellis M.W."/>
            <person name="Mishler B.D."/>
            <person name="Kelch D.G."/>
            <person name="Olmstead R.G."/>
            <person name="Boore J.L."/>
        </authorList>
    </citation>
    <scope>NUCLEOTIDE SEQUENCE [LARGE SCALE GENOMIC DNA]</scope>
</reference>
<dbReference type="EMBL" id="AY660566">
    <property type="protein sequence ID" value="AAT80691.1"/>
    <property type="molecule type" value="Genomic_DNA"/>
</dbReference>
<dbReference type="RefSeq" id="YP_209495.2">
    <property type="nucleotide sequence ID" value="NC_006861.1"/>
</dbReference>
<dbReference type="SMR" id="Q5SD21"/>
<dbReference type="GeneID" id="3283786"/>
<dbReference type="GO" id="GO:0009507">
    <property type="term" value="C:chloroplast"/>
    <property type="evidence" value="ECO:0007669"/>
    <property type="project" value="UniProtKB-SubCell"/>
</dbReference>
<dbReference type="GO" id="GO:1990904">
    <property type="term" value="C:ribonucleoprotein complex"/>
    <property type="evidence" value="ECO:0007669"/>
    <property type="project" value="UniProtKB-KW"/>
</dbReference>
<dbReference type="GO" id="GO:0005840">
    <property type="term" value="C:ribosome"/>
    <property type="evidence" value="ECO:0007669"/>
    <property type="project" value="UniProtKB-KW"/>
</dbReference>
<dbReference type="GO" id="GO:0003735">
    <property type="term" value="F:structural constituent of ribosome"/>
    <property type="evidence" value="ECO:0007669"/>
    <property type="project" value="InterPro"/>
</dbReference>
<dbReference type="GO" id="GO:0006412">
    <property type="term" value="P:translation"/>
    <property type="evidence" value="ECO:0007669"/>
    <property type="project" value="UniProtKB-UniRule"/>
</dbReference>
<dbReference type="HAMAP" id="MF_00251">
    <property type="entry name" value="Ribosomal_bL36"/>
    <property type="match status" value="1"/>
</dbReference>
<dbReference type="InterPro" id="IPR000473">
    <property type="entry name" value="Ribosomal_bL36"/>
</dbReference>
<dbReference type="InterPro" id="IPR035977">
    <property type="entry name" value="Ribosomal_bL36_sp"/>
</dbReference>
<dbReference type="NCBIfam" id="TIGR01022">
    <property type="entry name" value="rpmJ_bact"/>
    <property type="match status" value="1"/>
</dbReference>
<dbReference type="PANTHER" id="PTHR42888">
    <property type="entry name" value="50S RIBOSOMAL PROTEIN L36, CHLOROPLASTIC"/>
    <property type="match status" value="1"/>
</dbReference>
<dbReference type="PANTHER" id="PTHR42888:SF1">
    <property type="entry name" value="LARGE RIBOSOMAL SUBUNIT PROTEIN BL36C"/>
    <property type="match status" value="1"/>
</dbReference>
<dbReference type="Pfam" id="PF00444">
    <property type="entry name" value="Ribosomal_L36"/>
    <property type="match status" value="1"/>
</dbReference>
<dbReference type="SUPFAM" id="SSF57840">
    <property type="entry name" value="Ribosomal protein L36"/>
    <property type="match status" value="1"/>
</dbReference>
<dbReference type="PROSITE" id="PS00828">
    <property type="entry name" value="RIBOSOMAL_L36"/>
    <property type="match status" value="1"/>
</dbReference>
<sequence>MKIRASVRKICDKCRLIRRRRRIMIVCSNPKHKQRQG</sequence>
<evidence type="ECO:0000250" key="1"/>
<evidence type="ECO:0000255" key="2">
    <source>
        <dbReference type="HAMAP-Rule" id="MF_00251"/>
    </source>
</evidence>
<evidence type="ECO:0000305" key="3"/>